<accession>P40429</accession>
<accession>A8K505</accession>
<proteinExistence type="evidence at protein level"/>
<comment type="function">
    <text evidence="3 5 6 8 9 11">Associated with ribosomes but is not required for canonical ribosome function and has extra-ribosomal functions (PubMed:14567916, PubMed:17218275, PubMed:23636399, PubMed:32669547). Component of the GAIT (gamma interferon-activated inhibitor of translation) complex which mediates interferon-gamma-induced transcript-selective translation inhibition in inflammation processes (PubMed:23071094). Upon interferon-gamma activation and subsequent phosphorylation dissociates from the ribosome and assembles into the GAIT complex which binds to stem loop-containing GAIT elements in the 3'-UTR of diverse inflammatory mRNAs (such as ceruplasmin) and suppresses their translation (PubMed:23071094). In the GAIT complex interacts with m7G cap-bound eIF4G at or near the eIF3-binding site and blocks the recruitment of the 43S ribosomal complex (PubMed:23071094). Involved in methylation of rRNA (PubMed:17921318).</text>
</comment>
<comment type="subunit">
    <text evidence="3 4 5 9 11 15">Component of the 60S ribosome (PubMed:12962325, PubMed:14567916, PubMed:23636399, PubMed:32669547). Component of the GAIT complex (PubMed:15479637). Interacts with EIF4G1 (PubMed:17218275).</text>
</comment>
<comment type="subcellular location">
    <subcellularLocation>
        <location evidence="9 16">Cytoplasm</location>
    </subcellularLocation>
</comment>
<comment type="PTM">
    <text evidence="3 7">Phosphorylation at Ser-77 upon interferon-gamma treatment in monocytes involves a DAPK1-DAPK3 kinase cascade and is causing release from the ribosome, association with the GAIT complex and subsequent involvement in transcript-selective translation inhibition.</text>
</comment>
<comment type="PTM">
    <text evidence="1">Citrullinated by PADI4.</text>
</comment>
<comment type="similarity">
    <text evidence="14">Belongs to the universal ribosomal protein uL13 family.</text>
</comment>
<protein>
    <recommendedName>
        <fullName evidence="13">Large ribosomal subunit protein uL13</fullName>
    </recommendedName>
    <alternativeName>
        <fullName>23 kDa highly basic protein</fullName>
    </alternativeName>
    <alternativeName>
        <fullName>60S ribosomal protein L13a</fullName>
    </alternativeName>
</protein>
<feature type="initiator methionine" description="Removed" evidence="2 10 12 21 23 24 25">
    <location>
        <position position="1"/>
    </location>
</feature>
<feature type="chain" id="PRO_0000133769" description="Large ribosomal subunit protein uL13">
    <location>
        <begin position="2"/>
        <end position="203"/>
    </location>
</feature>
<feature type="modified residue" description="N-acetylalanine" evidence="2 10 12 21 23 24 25">
    <location>
        <position position="2"/>
    </location>
</feature>
<feature type="modified residue" description="Citrulline" evidence="1">
    <location>
        <position position="59"/>
    </location>
</feature>
<feature type="modified residue" description="Phosphoserine; by ZIPK/DAPK3" evidence="7">
    <location>
        <position position="77"/>
    </location>
</feature>
<feature type="modified residue" description="Citrulline" evidence="1">
    <location>
        <position position="140"/>
    </location>
</feature>
<feature type="modified residue" description="N6-acetyllysine" evidence="22">
    <location>
        <position position="191"/>
    </location>
</feature>
<feature type="mutagenesis site" description="Loss of interferon-gamma induced phosphorylation." evidence="7">
    <original>S</original>
    <variation>A</variation>
    <location>
        <position position="77"/>
    </location>
</feature>
<organism>
    <name type="scientific">Homo sapiens</name>
    <name type="common">Human</name>
    <dbReference type="NCBI Taxonomy" id="9606"/>
    <lineage>
        <taxon>Eukaryota</taxon>
        <taxon>Metazoa</taxon>
        <taxon>Chordata</taxon>
        <taxon>Craniata</taxon>
        <taxon>Vertebrata</taxon>
        <taxon>Euteleostomi</taxon>
        <taxon>Mammalia</taxon>
        <taxon>Eutheria</taxon>
        <taxon>Euarchontoglires</taxon>
        <taxon>Primates</taxon>
        <taxon>Haplorrhini</taxon>
        <taxon>Catarrhini</taxon>
        <taxon>Hominidae</taxon>
        <taxon>Homo</taxon>
    </lineage>
</organism>
<sequence length="203" mass="23577">MAEVQVLVLDGRGHLLGRLAAIVAKQVLLGRKVVVVRCEGINISGNFYRNKLKYLAFLRKRMNTNPSRGPYHFRAPSRIFWRTVRGMLPHKTKRGQAALDRLKVFDGIPPPYDKKKRMVVPAALKVVRLKPTRKFAYLGRLAHEVGWKYQAVTATLEEKRKEKAKIHYRKKKQLMRLRKQAEKNVEKKIDKYTEVLKTHGLLV</sequence>
<keyword id="KW-0002">3D-structure</keyword>
<keyword id="KW-0007">Acetylation</keyword>
<keyword id="KW-0164">Citrullination</keyword>
<keyword id="KW-0963">Cytoplasm</keyword>
<keyword id="KW-0903">Direct protein sequencing</keyword>
<keyword id="KW-0597">Phosphoprotein</keyword>
<keyword id="KW-1267">Proteomics identification</keyword>
<keyword id="KW-1185">Reference proteome</keyword>
<keyword id="KW-0687">Ribonucleoprotein</keyword>
<keyword id="KW-0689">Ribosomal protein</keyword>
<keyword id="KW-0810">Translation regulation</keyword>
<dbReference type="EMBL" id="X56932">
    <property type="protein sequence ID" value="CAA40254.1"/>
    <property type="molecule type" value="mRNA"/>
</dbReference>
<dbReference type="EMBL" id="AB028893">
    <property type="protein sequence ID" value="BAA88214.1"/>
    <property type="molecule type" value="Genomic_DNA"/>
</dbReference>
<dbReference type="EMBL" id="AK291120">
    <property type="protein sequence ID" value="BAF83809.1"/>
    <property type="molecule type" value="mRNA"/>
</dbReference>
<dbReference type="EMBL" id="CH471177">
    <property type="protein sequence ID" value="EAW52495.1"/>
    <property type="molecule type" value="Genomic_DNA"/>
</dbReference>
<dbReference type="EMBL" id="BC000514">
    <property type="protein sequence ID" value="AAH00514.1"/>
    <property type="molecule type" value="mRNA"/>
</dbReference>
<dbReference type="EMBL" id="BC001675">
    <property type="protein sequence ID" value="AAH01675.1"/>
    <property type="molecule type" value="mRNA"/>
</dbReference>
<dbReference type="EMBL" id="BC001836">
    <property type="protein sequence ID" value="AAH01836.1"/>
    <property type="molecule type" value="mRNA"/>
</dbReference>
<dbReference type="EMBL" id="BC062537">
    <property type="protein sequence ID" value="AAH62537.1"/>
    <property type="molecule type" value="mRNA"/>
</dbReference>
<dbReference type="EMBL" id="BC065236">
    <property type="protein sequence ID" value="AAH65236.1"/>
    <property type="molecule type" value="mRNA"/>
</dbReference>
<dbReference type="EMBL" id="BC070223">
    <property type="protein sequence ID" value="AAH70223.1"/>
    <property type="molecule type" value="mRNA"/>
</dbReference>
<dbReference type="EMBL" id="BC071929">
    <property type="protein sequence ID" value="AAH71929.1"/>
    <property type="molecule type" value="mRNA"/>
</dbReference>
<dbReference type="CCDS" id="CCDS12768.1"/>
<dbReference type="PIR" id="S29539">
    <property type="entry name" value="S29539"/>
</dbReference>
<dbReference type="RefSeq" id="NP_001257420.1">
    <property type="nucleotide sequence ID" value="NM_001270491.1"/>
</dbReference>
<dbReference type="RefSeq" id="NP_036555.1">
    <property type="nucleotide sequence ID" value="NM_012423.4"/>
</dbReference>
<dbReference type="PDB" id="4UG0">
    <property type="method" value="EM"/>
    <property type="chains" value="LO=1-203"/>
</dbReference>
<dbReference type="PDB" id="4V6X">
    <property type="method" value="EM"/>
    <property type="resolution" value="5.00 A"/>
    <property type="chains" value="CO=1-203"/>
</dbReference>
<dbReference type="PDB" id="5AJ0">
    <property type="method" value="EM"/>
    <property type="resolution" value="3.50 A"/>
    <property type="chains" value="AO=1-203"/>
</dbReference>
<dbReference type="PDB" id="5LKS">
    <property type="method" value="EM"/>
    <property type="resolution" value="3.60 A"/>
    <property type="chains" value="LO=1-203"/>
</dbReference>
<dbReference type="PDB" id="5T2C">
    <property type="method" value="EM"/>
    <property type="resolution" value="3.60 A"/>
    <property type="chains" value="I=1-203"/>
</dbReference>
<dbReference type="PDB" id="6IP5">
    <property type="method" value="EM"/>
    <property type="resolution" value="3.90 A"/>
    <property type="chains" value="2I=1-203"/>
</dbReference>
<dbReference type="PDB" id="6IP6">
    <property type="method" value="EM"/>
    <property type="resolution" value="4.50 A"/>
    <property type="chains" value="2I=1-203"/>
</dbReference>
<dbReference type="PDB" id="6IP8">
    <property type="method" value="EM"/>
    <property type="resolution" value="3.90 A"/>
    <property type="chains" value="2I=1-203"/>
</dbReference>
<dbReference type="PDB" id="6LQM">
    <property type="method" value="EM"/>
    <property type="resolution" value="3.09 A"/>
    <property type="chains" value="V=1-203"/>
</dbReference>
<dbReference type="PDB" id="6LSR">
    <property type="method" value="EM"/>
    <property type="resolution" value="3.13 A"/>
    <property type="chains" value="V=1-203"/>
</dbReference>
<dbReference type="PDB" id="6LSS">
    <property type="method" value="EM"/>
    <property type="resolution" value="3.23 A"/>
    <property type="chains" value="V=1-203"/>
</dbReference>
<dbReference type="PDB" id="6LU8">
    <property type="method" value="EM"/>
    <property type="resolution" value="3.13 A"/>
    <property type="chains" value="V=1-203"/>
</dbReference>
<dbReference type="PDB" id="6OLE">
    <property type="method" value="EM"/>
    <property type="resolution" value="3.10 A"/>
    <property type="chains" value="P=5-199"/>
</dbReference>
<dbReference type="PDB" id="6OLF">
    <property type="method" value="EM"/>
    <property type="resolution" value="3.90 A"/>
    <property type="chains" value="P=5-199"/>
</dbReference>
<dbReference type="PDB" id="6OLG">
    <property type="method" value="EM"/>
    <property type="resolution" value="3.40 A"/>
    <property type="chains" value="AO=5-199"/>
</dbReference>
<dbReference type="PDB" id="6OLI">
    <property type="method" value="EM"/>
    <property type="resolution" value="3.50 A"/>
    <property type="chains" value="P=5-199"/>
</dbReference>
<dbReference type="PDB" id="6OLZ">
    <property type="method" value="EM"/>
    <property type="resolution" value="3.90 A"/>
    <property type="chains" value="AO=5-199"/>
</dbReference>
<dbReference type="PDB" id="6OM0">
    <property type="method" value="EM"/>
    <property type="resolution" value="3.10 A"/>
    <property type="chains" value="P=5-199"/>
</dbReference>
<dbReference type="PDB" id="6OM7">
    <property type="method" value="EM"/>
    <property type="resolution" value="3.70 A"/>
    <property type="chains" value="P=5-199"/>
</dbReference>
<dbReference type="PDB" id="6QZP">
    <property type="method" value="EM"/>
    <property type="resolution" value="2.90 A"/>
    <property type="chains" value="LO=3-203"/>
</dbReference>
<dbReference type="PDB" id="6W6L">
    <property type="method" value="EM"/>
    <property type="resolution" value="3.84 A"/>
    <property type="chains" value="P=1-203"/>
</dbReference>
<dbReference type="PDB" id="6XA1">
    <property type="method" value="EM"/>
    <property type="resolution" value="2.80 A"/>
    <property type="chains" value="LO=3-203"/>
</dbReference>
<dbReference type="PDB" id="6Y0G">
    <property type="method" value="EM"/>
    <property type="resolution" value="3.20 A"/>
    <property type="chains" value="LO=1-203"/>
</dbReference>
<dbReference type="PDB" id="6Y2L">
    <property type="method" value="EM"/>
    <property type="resolution" value="3.00 A"/>
    <property type="chains" value="LO=1-203"/>
</dbReference>
<dbReference type="PDB" id="6Y57">
    <property type="method" value="EM"/>
    <property type="resolution" value="3.50 A"/>
    <property type="chains" value="LO=1-203"/>
</dbReference>
<dbReference type="PDB" id="6Y6X">
    <property type="method" value="EM"/>
    <property type="resolution" value="2.80 A"/>
    <property type="chains" value="LO=3-203"/>
</dbReference>
<dbReference type="PDB" id="6Z6L">
    <property type="method" value="EM"/>
    <property type="resolution" value="3.00 A"/>
    <property type="chains" value="LO=1-203"/>
</dbReference>
<dbReference type="PDB" id="6Z6M">
    <property type="method" value="EM"/>
    <property type="resolution" value="3.10 A"/>
    <property type="chains" value="LO=1-203"/>
</dbReference>
<dbReference type="PDB" id="6Z6N">
    <property type="method" value="EM"/>
    <property type="resolution" value="2.90 A"/>
    <property type="chains" value="LO=1-203"/>
</dbReference>
<dbReference type="PDB" id="6ZM7">
    <property type="method" value="EM"/>
    <property type="resolution" value="2.70 A"/>
    <property type="chains" value="LO=1-203"/>
</dbReference>
<dbReference type="PDB" id="6ZME">
    <property type="method" value="EM"/>
    <property type="resolution" value="3.00 A"/>
    <property type="chains" value="LO=1-203"/>
</dbReference>
<dbReference type="PDB" id="6ZMI">
    <property type="method" value="EM"/>
    <property type="resolution" value="2.60 A"/>
    <property type="chains" value="LO=1-203"/>
</dbReference>
<dbReference type="PDB" id="6ZMO">
    <property type="method" value="EM"/>
    <property type="resolution" value="3.10 A"/>
    <property type="chains" value="LO=1-203"/>
</dbReference>
<dbReference type="PDB" id="7BHP">
    <property type="method" value="EM"/>
    <property type="resolution" value="3.30 A"/>
    <property type="chains" value="LO=1-203"/>
</dbReference>
<dbReference type="PDB" id="7F5S">
    <property type="method" value="EM"/>
    <property type="resolution" value="2.72 A"/>
    <property type="chains" value="LO=1-203"/>
</dbReference>
<dbReference type="PDB" id="7OW7">
    <property type="method" value="EM"/>
    <property type="resolution" value="2.20 A"/>
    <property type="chains" value="I=1-203"/>
</dbReference>
<dbReference type="PDB" id="7QVP">
    <property type="method" value="EM"/>
    <property type="resolution" value="3.00 A"/>
    <property type="chains" value="LO/MO=1-203"/>
</dbReference>
<dbReference type="PDB" id="7XNX">
    <property type="method" value="EM"/>
    <property type="resolution" value="2.70 A"/>
    <property type="chains" value="LO=1-203"/>
</dbReference>
<dbReference type="PDB" id="7XNY">
    <property type="method" value="EM"/>
    <property type="resolution" value="2.50 A"/>
    <property type="chains" value="LO=1-203"/>
</dbReference>
<dbReference type="PDB" id="8A3D">
    <property type="method" value="EM"/>
    <property type="resolution" value="1.67 A"/>
    <property type="chains" value="I=1-203"/>
</dbReference>
<dbReference type="PDB" id="8FKP">
    <property type="method" value="EM"/>
    <property type="resolution" value="2.85 A"/>
    <property type="chains" value="L7=1-203"/>
</dbReference>
<dbReference type="PDB" id="8FKQ">
    <property type="method" value="EM"/>
    <property type="resolution" value="2.76 A"/>
    <property type="chains" value="L7=1-203"/>
</dbReference>
<dbReference type="PDB" id="8FKR">
    <property type="method" value="EM"/>
    <property type="resolution" value="2.89 A"/>
    <property type="chains" value="L7=1-203"/>
</dbReference>
<dbReference type="PDB" id="8FKS">
    <property type="method" value="EM"/>
    <property type="resolution" value="2.88 A"/>
    <property type="chains" value="L7=1-203"/>
</dbReference>
<dbReference type="PDB" id="8FKT">
    <property type="method" value="EM"/>
    <property type="resolution" value="2.81 A"/>
    <property type="chains" value="L7=1-203"/>
</dbReference>
<dbReference type="PDB" id="8FKU">
    <property type="method" value="EM"/>
    <property type="resolution" value="2.82 A"/>
    <property type="chains" value="L7=1-203"/>
</dbReference>
<dbReference type="PDB" id="8FKV">
    <property type="method" value="EM"/>
    <property type="resolution" value="2.47 A"/>
    <property type="chains" value="L7=1-203"/>
</dbReference>
<dbReference type="PDB" id="8FKW">
    <property type="method" value="EM"/>
    <property type="resolution" value="2.50 A"/>
    <property type="chains" value="L7=1-203"/>
</dbReference>
<dbReference type="PDB" id="8FKX">
    <property type="method" value="EM"/>
    <property type="resolution" value="2.59 A"/>
    <property type="chains" value="L7=1-203"/>
</dbReference>
<dbReference type="PDB" id="8FKY">
    <property type="method" value="EM"/>
    <property type="resolution" value="2.67 A"/>
    <property type="chains" value="L7=1-203"/>
</dbReference>
<dbReference type="PDB" id="8FKZ">
    <property type="method" value="EM"/>
    <property type="resolution" value="3.04 A"/>
    <property type="chains" value="L7=1-203"/>
</dbReference>
<dbReference type="PDB" id="8FL0">
    <property type="method" value="EM"/>
    <property type="resolution" value="2.91 A"/>
    <property type="chains" value="L7=1-203"/>
</dbReference>
<dbReference type="PDB" id="8FL2">
    <property type="method" value="EM"/>
    <property type="resolution" value="2.67 A"/>
    <property type="chains" value="L7=1-203"/>
</dbReference>
<dbReference type="PDB" id="8FL3">
    <property type="method" value="EM"/>
    <property type="resolution" value="2.53 A"/>
    <property type="chains" value="L7=1-203"/>
</dbReference>
<dbReference type="PDB" id="8FL4">
    <property type="method" value="EM"/>
    <property type="resolution" value="2.89 A"/>
    <property type="chains" value="L7=1-203"/>
</dbReference>
<dbReference type="PDB" id="8FL6">
    <property type="method" value="EM"/>
    <property type="resolution" value="2.62 A"/>
    <property type="chains" value="L7=1-203"/>
</dbReference>
<dbReference type="PDB" id="8FL7">
    <property type="method" value="EM"/>
    <property type="resolution" value="2.55 A"/>
    <property type="chains" value="L7=1-203"/>
</dbReference>
<dbReference type="PDB" id="8FL9">
    <property type="method" value="EM"/>
    <property type="resolution" value="2.75 A"/>
    <property type="chains" value="L7=1-203"/>
</dbReference>
<dbReference type="PDB" id="8FLA">
    <property type="method" value="EM"/>
    <property type="resolution" value="2.63 A"/>
    <property type="chains" value="L7=1-203"/>
</dbReference>
<dbReference type="PDB" id="8FLB">
    <property type="method" value="EM"/>
    <property type="resolution" value="2.55 A"/>
    <property type="chains" value="L7=1-203"/>
</dbReference>
<dbReference type="PDB" id="8FLC">
    <property type="method" value="EM"/>
    <property type="resolution" value="2.76 A"/>
    <property type="chains" value="L7=1-203"/>
</dbReference>
<dbReference type="PDB" id="8FLD">
    <property type="method" value="EM"/>
    <property type="resolution" value="2.58 A"/>
    <property type="chains" value="L7=1-203"/>
</dbReference>
<dbReference type="PDB" id="8FLE">
    <property type="method" value="EM"/>
    <property type="resolution" value="2.48 A"/>
    <property type="chains" value="L7=1-203"/>
</dbReference>
<dbReference type="PDB" id="8FLF">
    <property type="method" value="EM"/>
    <property type="resolution" value="2.65 A"/>
    <property type="chains" value="L7=1-203"/>
</dbReference>
<dbReference type="PDB" id="8G5Y">
    <property type="method" value="EM"/>
    <property type="resolution" value="2.29 A"/>
    <property type="chains" value="LO=1-203"/>
</dbReference>
<dbReference type="PDB" id="8G5Z">
    <property type="method" value="EM"/>
    <property type="resolution" value="2.64 A"/>
    <property type="chains" value="LO=3-203"/>
</dbReference>
<dbReference type="PDB" id="8G60">
    <property type="method" value="EM"/>
    <property type="resolution" value="2.54 A"/>
    <property type="chains" value="LO=1-203"/>
</dbReference>
<dbReference type="PDB" id="8G61">
    <property type="method" value="EM"/>
    <property type="resolution" value="2.94 A"/>
    <property type="chains" value="LO=1-203"/>
</dbReference>
<dbReference type="PDB" id="8G6J">
    <property type="method" value="EM"/>
    <property type="resolution" value="2.80 A"/>
    <property type="chains" value="LO=1-203"/>
</dbReference>
<dbReference type="PDB" id="8GLP">
    <property type="method" value="EM"/>
    <property type="resolution" value="1.67 A"/>
    <property type="chains" value="LO=1-203"/>
</dbReference>
<dbReference type="PDB" id="8IDT">
    <property type="method" value="EM"/>
    <property type="resolution" value="2.80 A"/>
    <property type="chains" value="V=1-203"/>
</dbReference>
<dbReference type="PDB" id="8IDY">
    <property type="method" value="EM"/>
    <property type="resolution" value="3.00 A"/>
    <property type="chains" value="V=1-203"/>
</dbReference>
<dbReference type="PDB" id="8IE3">
    <property type="method" value="EM"/>
    <property type="resolution" value="3.30 A"/>
    <property type="chains" value="V=1-203"/>
</dbReference>
<dbReference type="PDB" id="8IFD">
    <property type="method" value="EM"/>
    <property type="resolution" value="2.59 A"/>
    <property type="chains" value="2I=1-203"/>
</dbReference>
<dbReference type="PDB" id="8IFE">
    <property type="method" value="EM"/>
    <property type="resolution" value="2.57 A"/>
    <property type="chains" value="2I=1-203"/>
</dbReference>
<dbReference type="PDB" id="8INE">
    <property type="method" value="EM"/>
    <property type="resolution" value="3.20 A"/>
    <property type="chains" value="V=1-203"/>
</dbReference>
<dbReference type="PDB" id="8INF">
    <property type="method" value="EM"/>
    <property type="resolution" value="3.00 A"/>
    <property type="chains" value="V=1-203"/>
</dbReference>
<dbReference type="PDB" id="8INK">
    <property type="method" value="EM"/>
    <property type="resolution" value="3.20 A"/>
    <property type="chains" value="V=1-203"/>
</dbReference>
<dbReference type="PDB" id="8IPD">
    <property type="method" value="EM"/>
    <property type="resolution" value="3.20 A"/>
    <property type="chains" value="V=1-203"/>
</dbReference>
<dbReference type="PDB" id="8IPX">
    <property type="method" value="EM"/>
    <property type="resolution" value="4.30 A"/>
    <property type="chains" value="V=1-203"/>
</dbReference>
<dbReference type="PDB" id="8IPY">
    <property type="method" value="EM"/>
    <property type="resolution" value="3.20 A"/>
    <property type="chains" value="V=1-203"/>
</dbReference>
<dbReference type="PDB" id="8IR1">
    <property type="method" value="EM"/>
    <property type="resolution" value="3.30 A"/>
    <property type="chains" value="V=1-203"/>
</dbReference>
<dbReference type="PDB" id="8IR3">
    <property type="method" value="EM"/>
    <property type="resolution" value="3.50 A"/>
    <property type="chains" value="V=1-203"/>
</dbReference>
<dbReference type="PDB" id="8JDJ">
    <property type="method" value="EM"/>
    <property type="resolution" value="2.50 A"/>
    <property type="chains" value="T=1-203"/>
</dbReference>
<dbReference type="PDB" id="8JDK">
    <property type="method" value="EM"/>
    <property type="resolution" value="2.26 A"/>
    <property type="chains" value="T=1-203"/>
</dbReference>
<dbReference type="PDB" id="8JDL">
    <property type="method" value="EM"/>
    <property type="resolution" value="2.42 A"/>
    <property type="chains" value="T=1-203"/>
</dbReference>
<dbReference type="PDB" id="8JDM">
    <property type="method" value="EM"/>
    <property type="resolution" value="2.67 A"/>
    <property type="chains" value="T=1-203"/>
</dbReference>
<dbReference type="PDB" id="8K2C">
    <property type="method" value="EM"/>
    <property type="resolution" value="2.40 A"/>
    <property type="chains" value="LO=1-203"/>
</dbReference>
<dbReference type="PDB" id="8OHD">
    <property type="method" value="EM"/>
    <property type="resolution" value="3.10 A"/>
    <property type="chains" value="LO=1-203"/>
</dbReference>
<dbReference type="PDB" id="8OJ0">
    <property type="method" value="EM"/>
    <property type="resolution" value="3.30 A"/>
    <property type="chains" value="LO=1-203"/>
</dbReference>
<dbReference type="PDB" id="8OJ5">
    <property type="method" value="EM"/>
    <property type="resolution" value="2.90 A"/>
    <property type="chains" value="LO=1-203"/>
</dbReference>
<dbReference type="PDB" id="8OJ8">
    <property type="method" value="EM"/>
    <property type="resolution" value="3.30 A"/>
    <property type="chains" value="LO=1-203"/>
</dbReference>
<dbReference type="PDB" id="8QFD">
    <property type="method" value="EM"/>
    <property type="resolution" value="2.20 A"/>
    <property type="chains" value="O=1-203"/>
</dbReference>
<dbReference type="PDB" id="8QOI">
    <property type="method" value="EM"/>
    <property type="resolution" value="1.90 A"/>
    <property type="chains" value="LO=1-203"/>
</dbReference>
<dbReference type="PDB" id="8QYX">
    <property type="method" value="EM"/>
    <property type="resolution" value="1.78 A"/>
    <property type="chains" value="I1=1-203"/>
</dbReference>
<dbReference type="PDB" id="8RL2">
    <property type="method" value="EM"/>
    <property type="resolution" value="2.84 A"/>
    <property type="chains" value="LO=1-203"/>
</dbReference>
<dbReference type="PDB" id="8UKB">
    <property type="method" value="EM"/>
    <property type="resolution" value="3.05 A"/>
    <property type="chains" value="LO=3-203"/>
</dbReference>
<dbReference type="PDB" id="8XSX">
    <property type="method" value="EM"/>
    <property type="resolution" value="2.40 A"/>
    <property type="chains" value="LO=1-203"/>
</dbReference>
<dbReference type="PDB" id="8XSY">
    <property type="method" value="EM"/>
    <property type="resolution" value="3.00 A"/>
    <property type="chains" value="LO=1-203"/>
</dbReference>
<dbReference type="PDB" id="8XSZ">
    <property type="method" value="EM"/>
    <property type="resolution" value="3.20 A"/>
    <property type="chains" value="LO=1-203"/>
</dbReference>
<dbReference type="PDB" id="8Y0W">
    <property type="method" value="EM"/>
    <property type="resolution" value="3.40 A"/>
    <property type="chains" value="LO=1-203"/>
</dbReference>
<dbReference type="PDB" id="8Y0X">
    <property type="method" value="EM"/>
    <property type="resolution" value="3.30 A"/>
    <property type="chains" value="LO=1-203"/>
</dbReference>
<dbReference type="PDB" id="8YOO">
    <property type="method" value="EM"/>
    <property type="resolution" value="2.00 A"/>
    <property type="chains" value="LO=1-203"/>
</dbReference>
<dbReference type="PDB" id="8YOP">
    <property type="method" value="EM"/>
    <property type="resolution" value="2.20 A"/>
    <property type="chains" value="LO=1-203"/>
</dbReference>
<dbReference type="PDB" id="9C3H">
    <property type="method" value="EM"/>
    <property type="resolution" value="2.00 A"/>
    <property type="chains" value="LY=1-203"/>
</dbReference>
<dbReference type="PDB" id="9G8M">
    <property type="method" value="EM"/>
    <property type="resolution" value="3.30 A"/>
    <property type="chains" value="LO=1-203"/>
</dbReference>
<dbReference type="PDB" id="9GMO">
    <property type="method" value="EM"/>
    <property type="resolution" value="2.59 A"/>
    <property type="chains" value="I=1-203"/>
</dbReference>
<dbReference type="PDBsum" id="4UG0"/>
<dbReference type="PDBsum" id="4V6X"/>
<dbReference type="PDBsum" id="5AJ0"/>
<dbReference type="PDBsum" id="5LKS"/>
<dbReference type="PDBsum" id="5T2C"/>
<dbReference type="PDBsum" id="6IP5"/>
<dbReference type="PDBsum" id="6IP6"/>
<dbReference type="PDBsum" id="6IP8"/>
<dbReference type="PDBsum" id="6LQM"/>
<dbReference type="PDBsum" id="6LSR"/>
<dbReference type="PDBsum" id="6LSS"/>
<dbReference type="PDBsum" id="6LU8"/>
<dbReference type="PDBsum" id="6OLE"/>
<dbReference type="PDBsum" id="6OLF"/>
<dbReference type="PDBsum" id="6OLG"/>
<dbReference type="PDBsum" id="6OLI"/>
<dbReference type="PDBsum" id="6OLZ"/>
<dbReference type="PDBsum" id="6OM0"/>
<dbReference type="PDBsum" id="6OM7"/>
<dbReference type="PDBsum" id="6QZP"/>
<dbReference type="PDBsum" id="6W6L"/>
<dbReference type="PDBsum" id="6XA1"/>
<dbReference type="PDBsum" id="6Y0G"/>
<dbReference type="PDBsum" id="6Y2L"/>
<dbReference type="PDBsum" id="6Y57"/>
<dbReference type="PDBsum" id="6Y6X"/>
<dbReference type="PDBsum" id="6Z6L"/>
<dbReference type="PDBsum" id="6Z6M"/>
<dbReference type="PDBsum" id="6Z6N"/>
<dbReference type="PDBsum" id="6ZM7"/>
<dbReference type="PDBsum" id="6ZME"/>
<dbReference type="PDBsum" id="6ZMI"/>
<dbReference type="PDBsum" id="6ZMO"/>
<dbReference type="PDBsum" id="7BHP"/>
<dbReference type="PDBsum" id="7F5S"/>
<dbReference type="PDBsum" id="7OW7"/>
<dbReference type="PDBsum" id="7QVP"/>
<dbReference type="PDBsum" id="7XNX"/>
<dbReference type="PDBsum" id="7XNY"/>
<dbReference type="PDBsum" id="8A3D"/>
<dbReference type="PDBsum" id="8FKP"/>
<dbReference type="PDBsum" id="8FKQ"/>
<dbReference type="PDBsum" id="8FKR"/>
<dbReference type="PDBsum" id="8FKS"/>
<dbReference type="PDBsum" id="8FKT"/>
<dbReference type="PDBsum" id="8FKU"/>
<dbReference type="PDBsum" id="8FKV"/>
<dbReference type="PDBsum" id="8FKW"/>
<dbReference type="PDBsum" id="8FKX"/>
<dbReference type="PDBsum" id="8FKY"/>
<dbReference type="PDBsum" id="8FKZ"/>
<dbReference type="PDBsum" id="8FL0"/>
<dbReference type="PDBsum" id="8FL2"/>
<dbReference type="PDBsum" id="8FL3"/>
<dbReference type="PDBsum" id="8FL4"/>
<dbReference type="PDBsum" id="8FL6"/>
<dbReference type="PDBsum" id="8FL7"/>
<dbReference type="PDBsum" id="8FL9"/>
<dbReference type="PDBsum" id="8FLA"/>
<dbReference type="PDBsum" id="8FLB"/>
<dbReference type="PDBsum" id="8FLC"/>
<dbReference type="PDBsum" id="8FLD"/>
<dbReference type="PDBsum" id="8FLE"/>
<dbReference type="PDBsum" id="8FLF"/>
<dbReference type="PDBsum" id="8G5Y"/>
<dbReference type="PDBsum" id="8G5Z"/>
<dbReference type="PDBsum" id="8G60"/>
<dbReference type="PDBsum" id="8G61"/>
<dbReference type="PDBsum" id="8G6J"/>
<dbReference type="PDBsum" id="8GLP"/>
<dbReference type="PDBsum" id="8IDT"/>
<dbReference type="PDBsum" id="8IDY"/>
<dbReference type="PDBsum" id="8IE3"/>
<dbReference type="PDBsum" id="8IFD"/>
<dbReference type="PDBsum" id="8IFE"/>
<dbReference type="PDBsum" id="8INE"/>
<dbReference type="PDBsum" id="8INF"/>
<dbReference type="PDBsum" id="8INK"/>
<dbReference type="PDBsum" id="8IPD"/>
<dbReference type="PDBsum" id="8IPX"/>
<dbReference type="PDBsum" id="8IPY"/>
<dbReference type="PDBsum" id="8IR1"/>
<dbReference type="PDBsum" id="8IR3"/>
<dbReference type="PDBsum" id="8JDJ"/>
<dbReference type="PDBsum" id="8JDK"/>
<dbReference type="PDBsum" id="8JDL"/>
<dbReference type="PDBsum" id="8JDM"/>
<dbReference type="PDBsum" id="8K2C"/>
<dbReference type="PDBsum" id="8OHD"/>
<dbReference type="PDBsum" id="8OJ0"/>
<dbReference type="PDBsum" id="8OJ5"/>
<dbReference type="PDBsum" id="8OJ8"/>
<dbReference type="PDBsum" id="8QFD"/>
<dbReference type="PDBsum" id="8QOI"/>
<dbReference type="PDBsum" id="8QYX"/>
<dbReference type="PDBsum" id="8RL2"/>
<dbReference type="PDBsum" id="8UKB"/>
<dbReference type="PDBsum" id="8XSX"/>
<dbReference type="PDBsum" id="8XSY"/>
<dbReference type="PDBsum" id="8XSZ"/>
<dbReference type="PDBsum" id="8Y0W"/>
<dbReference type="PDBsum" id="8Y0X"/>
<dbReference type="PDBsum" id="8YOO"/>
<dbReference type="PDBsum" id="8YOP"/>
<dbReference type="PDBsum" id="9C3H"/>
<dbReference type="PDBsum" id="9G8M"/>
<dbReference type="PDBsum" id="9GMO"/>
<dbReference type="EMDB" id="EMD-0948"/>
<dbReference type="EMDB" id="EMD-0963"/>
<dbReference type="EMDB" id="EMD-0964"/>
<dbReference type="EMDB" id="EMD-0978"/>
<dbReference type="EMDB" id="EMD-10668"/>
<dbReference type="EMDB" id="EMD-10674"/>
<dbReference type="EMDB" id="EMD-10690"/>
<dbReference type="EMDB" id="EMD-10709"/>
<dbReference type="EMDB" id="EMD-11098"/>
<dbReference type="EMDB" id="EMD-11099"/>
<dbReference type="EMDB" id="EMD-11100"/>
<dbReference type="EMDB" id="EMD-11288"/>
<dbReference type="EMDB" id="EMD-11289"/>
<dbReference type="EMDB" id="EMD-11292"/>
<dbReference type="EMDB" id="EMD-11299"/>
<dbReference type="EMDB" id="EMD-12189"/>
<dbReference type="EMDB" id="EMD-13094"/>
<dbReference type="EMDB" id="EMD-14181"/>
<dbReference type="EMDB" id="EMD-15113"/>
<dbReference type="EMDB" id="EMD-16880"/>
<dbReference type="EMDB" id="EMD-16902"/>
<dbReference type="EMDB" id="EMD-16905"/>
<dbReference type="EMDB" id="EMD-16908"/>
<dbReference type="EMDB" id="EMD-18382"/>
<dbReference type="EMDB" id="EMD-18539"/>
<dbReference type="EMDB" id="EMD-18765"/>
<dbReference type="EMDB" id="EMD-19330"/>
<dbReference type="EMDB" id="EMD-29252"/>
<dbReference type="EMDB" id="EMD-29253"/>
<dbReference type="EMDB" id="EMD-29254"/>
<dbReference type="EMDB" id="EMD-29255"/>
<dbReference type="EMDB" id="EMD-29256"/>
<dbReference type="EMDB" id="EMD-29257"/>
<dbReference type="EMDB" id="EMD-29258"/>
<dbReference type="EMDB" id="EMD-29259"/>
<dbReference type="EMDB" id="EMD-29260"/>
<dbReference type="EMDB" id="EMD-29261"/>
<dbReference type="EMDB" id="EMD-29262"/>
<dbReference type="EMDB" id="EMD-29263"/>
<dbReference type="EMDB" id="EMD-29265"/>
<dbReference type="EMDB" id="EMD-29266"/>
<dbReference type="EMDB" id="EMD-29267"/>
<dbReference type="EMDB" id="EMD-29268"/>
<dbReference type="EMDB" id="EMD-29269"/>
<dbReference type="EMDB" id="EMD-29271"/>
<dbReference type="EMDB" id="EMD-29272"/>
<dbReference type="EMDB" id="EMD-29273"/>
<dbReference type="EMDB" id="EMD-29274"/>
<dbReference type="EMDB" id="EMD-29275"/>
<dbReference type="EMDB" id="EMD-29276"/>
<dbReference type="EMDB" id="EMD-29277"/>
<dbReference type="EMDB" id="EMD-29757"/>
<dbReference type="EMDB" id="EMD-29758"/>
<dbReference type="EMDB" id="EMD-29759"/>
<dbReference type="EMDB" id="EMD-29760"/>
<dbReference type="EMDB" id="EMD-29771"/>
<dbReference type="EMDB" id="EMD-31465"/>
<dbReference type="EMDB" id="EMD-33329"/>
<dbReference type="EMDB" id="EMD-33330"/>
<dbReference type="EMDB" id="EMD-35370"/>
<dbReference type="EMDB" id="EMD-35371"/>
<dbReference type="EMDB" id="EMD-35375"/>
<dbReference type="EMDB" id="EMD-35413"/>
<dbReference type="EMDB" id="EMD-35414"/>
<dbReference type="EMDB" id="EMD-35596"/>
<dbReference type="EMDB" id="EMD-35597"/>
<dbReference type="EMDB" id="EMD-35599"/>
<dbReference type="EMDB" id="EMD-35639"/>
<dbReference type="EMDB" id="EMD-35649"/>
<dbReference type="EMDB" id="EMD-35651"/>
<dbReference type="EMDB" id="EMD-35672"/>
<dbReference type="EMDB" id="EMD-35673"/>
<dbReference type="EMDB" id="EMD-36178"/>
<dbReference type="EMDB" id="EMD-36179"/>
<dbReference type="EMDB" id="EMD-36180"/>
<dbReference type="EMDB" id="EMD-36181"/>
<dbReference type="EMDB" id="EMD-36838"/>
<dbReference type="EMDB" id="EMD-38629"/>
<dbReference type="EMDB" id="EMD-38630"/>
<dbReference type="EMDB" id="EMD-38631"/>
<dbReference type="EMDB" id="EMD-3883"/>
<dbReference type="EMDB" id="EMD-39455"/>
<dbReference type="EMDB" id="EMD-39456"/>
<dbReference type="EMDB" id="EMD-40205"/>
<dbReference type="EMDB" id="EMD-4070"/>
<dbReference type="EMDB" id="EMD-42351"/>
<dbReference type="EMDB" id="EMD-45170"/>
<dbReference type="EMDB" id="EMD-51132"/>
<dbReference type="EMDB" id="EMD-51452"/>
<dbReference type="EMDB" id="EMD-9701"/>
<dbReference type="EMDB" id="EMD-9702"/>
<dbReference type="EMDB" id="EMD-9703"/>
<dbReference type="SMR" id="P40429"/>
<dbReference type="BioGRID" id="117068">
    <property type="interactions" value="595"/>
</dbReference>
<dbReference type="ComplexPortal" id="CPX-2476">
    <property type="entry name" value="GAIT complex"/>
</dbReference>
<dbReference type="ComplexPortal" id="CPX-5183">
    <property type="entry name" value="60S cytosolic large ribosomal subunit"/>
</dbReference>
<dbReference type="ComplexPortal" id="CPX-7664">
    <property type="entry name" value="60S cytosolic large ribosomal subunit, testis-specific variant"/>
</dbReference>
<dbReference type="ComplexPortal" id="CPX-7665">
    <property type="entry name" value="60S cytosolic large ribosomal subunit, striated muscle variant"/>
</dbReference>
<dbReference type="CORUM" id="P40429"/>
<dbReference type="FunCoup" id="P40429">
    <property type="interactions" value="1561"/>
</dbReference>
<dbReference type="IntAct" id="P40429">
    <property type="interactions" value="369"/>
</dbReference>
<dbReference type="MINT" id="P40429"/>
<dbReference type="STRING" id="9606.ENSP00000375730"/>
<dbReference type="DrugBank" id="DB02494">
    <property type="generic name" value="(S)-3-phenyllactic acid"/>
</dbReference>
<dbReference type="DrugBank" id="DB07374">
    <property type="generic name" value="Anisomycin"/>
</dbReference>
<dbReference type="DrugBank" id="DB08437">
    <property type="generic name" value="Puromycin"/>
</dbReference>
<dbReference type="MoonProt" id="P40429"/>
<dbReference type="GlyGen" id="P40429">
    <property type="glycosylation" value="2 sites, 1 O-linked glycan (1 site)"/>
</dbReference>
<dbReference type="iPTMnet" id="P40429"/>
<dbReference type="MetOSite" id="P40429"/>
<dbReference type="PhosphoSitePlus" id="P40429"/>
<dbReference type="SwissPalm" id="P40429"/>
<dbReference type="BioMuta" id="RPL13A"/>
<dbReference type="DMDM" id="730451"/>
<dbReference type="jPOST" id="P40429"/>
<dbReference type="MassIVE" id="P40429"/>
<dbReference type="PaxDb" id="9606-ENSP00000375730"/>
<dbReference type="PeptideAtlas" id="P40429"/>
<dbReference type="ProteomicsDB" id="55374"/>
<dbReference type="Pumba" id="P40429"/>
<dbReference type="TopDownProteomics" id="P40429"/>
<dbReference type="Antibodypedia" id="45892">
    <property type="antibodies" value="109 antibodies from 24 providers"/>
</dbReference>
<dbReference type="DNASU" id="23521"/>
<dbReference type="Ensembl" id="ENST00000391857.9">
    <property type="protein sequence ID" value="ENSP00000375730.4"/>
    <property type="gene ID" value="ENSG00000142541.18"/>
</dbReference>
<dbReference type="GeneID" id="23521"/>
<dbReference type="KEGG" id="hsa:23521"/>
<dbReference type="MANE-Select" id="ENST00000391857.9">
    <property type="protein sequence ID" value="ENSP00000375730.4"/>
    <property type="RefSeq nucleotide sequence ID" value="NM_012423.4"/>
    <property type="RefSeq protein sequence ID" value="NP_036555.1"/>
</dbReference>
<dbReference type="UCSC" id="uc002pny.5">
    <property type="organism name" value="human"/>
</dbReference>
<dbReference type="AGR" id="HGNC:10304"/>
<dbReference type="CTD" id="23521"/>
<dbReference type="DisGeNET" id="23521"/>
<dbReference type="GeneCards" id="RPL13A"/>
<dbReference type="HGNC" id="HGNC:10304">
    <property type="gene designation" value="RPL13A"/>
</dbReference>
<dbReference type="HPA" id="ENSG00000142541">
    <property type="expression patterns" value="Low tissue specificity"/>
</dbReference>
<dbReference type="MIM" id="619225">
    <property type="type" value="gene"/>
</dbReference>
<dbReference type="neXtProt" id="NX_P40429"/>
<dbReference type="OpenTargets" id="ENSG00000142541"/>
<dbReference type="PharmGKB" id="PA38122"/>
<dbReference type="VEuPathDB" id="HostDB:ENSG00000142541"/>
<dbReference type="eggNOG" id="KOG3204">
    <property type="taxonomic scope" value="Eukaryota"/>
</dbReference>
<dbReference type="GeneTree" id="ENSGT00390000010799"/>
<dbReference type="InParanoid" id="P40429"/>
<dbReference type="OMA" id="GMLPWKT"/>
<dbReference type="OrthoDB" id="1882297at2759"/>
<dbReference type="PAN-GO" id="P40429">
    <property type="GO annotations" value="5 GO annotations based on evolutionary models"/>
</dbReference>
<dbReference type="PhylomeDB" id="P40429"/>
<dbReference type="TreeFam" id="TF300159"/>
<dbReference type="PathwayCommons" id="P40429"/>
<dbReference type="Reactome" id="R-HSA-156827">
    <property type="pathway name" value="L13a-mediated translational silencing of Ceruloplasmin expression"/>
</dbReference>
<dbReference type="Reactome" id="R-HSA-156902">
    <property type="pathway name" value="Peptide chain elongation"/>
</dbReference>
<dbReference type="Reactome" id="R-HSA-1799339">
    <property type="pathway name" value="SRP-dependent cotranslational protein targeting to membrane"/>
</dbReference>
<dbReference type="Reactome" id="R-HSA-192823">
    <property type="pathway name" value="Viral mRNA Translation"/>
</dbReference>
<dbReference type="Reactome" id="R-HSA-2408557">
    <property type="pathway name" value="Selenocysteine synthesis"/>
</dbReference>
<dbReference type="Reactome" id="R-HSA-6791226">
    <property type="pathway name" value="Major pathway of rRNA processing in the nucleolus and cytosol"/>
</dbReference>
<dbReference type="Reactome" id="R-HSA-72689">
    <property type="pathway name" value="Formation of a pool of free 40S subunits"/>
</dbReference>
<dbReference type="Reactome" id="R-HSA-72706">
    <property type="pathway name" value="GTP hydrolysis and joining of the 60S ribosomal subunit"/>
</dbReference>
<dbReference type="Reactome" id="R-HSA-72764">
    <property type="pathway name" value="Eukaryotic Translation Termination"/>
</dbReference>
<dbReference type="Reactome" id="R-HSA-9010553">
    <property type="pathway name" value="Regulation of expression of SLITs and ROBOs"/>
</dbReference>
<dbReference type="Reactome" id="R-HSA-9633012">
    <property type="pathway name" value="Response of EIF2AK4 (GCN2) to amino acid deficiency"/>
</dbReference>
<dbReference type="Reactome" id="R-HSA-975956">
    <property type="pathway name" value="Nonsense Mediated Decay (NMD) independent of the Exon Junction Complex (EJC)"/>
</dbReference>
<dbReference type="Reactome" id="R-HSA-975957">
    <property type="pathway name" value="Nonsense Mediated Decay (NMD) enhanced by the Exon Junction Complex (EJC)"/>
</dbReference>
<dbReference type="SignaLink" id="P40429"/>
<dbReference type="SIGNOR" id="P40429"/>
<dbReference type="BioGRID-ORCS" id="23521">
    <property type="hits" value="583 hits in 1149 CRISPR screens"/>
</dbReference>
<dbReference type="CD-CODE" id="232F8A39">
    <property type="entry name" value="P-body"/>
</dbReference>
<dbReference type="CD-CODE" id="91857CE7">
    <property type="entry name" value="Nucleolus"/>
</dbReference>
<dbReference type="ChiTaRS" id="RPL13A">
    <property type="organism name" value="human"/>
</dbReference>
<dbReference type="GeneWiki" id="RPL13A"/>
<dbReference type="GenomeRNAi" id="23521"/>
<dbReference type="Pharos" id="P40429">
    <property type="development level" value="Tbio"/>
</dbReference>
<dbReference type="PRO" id="PR:P40429"/>
<dbReference type="Proteomes" id="UP000005640">
    <property type="component" value="Chromosome 19"/>
</dbReference>
<dbReference type="RNAct" id="P40429">
    <property type="molecule type" value="protein"/>
</dbReference>
<dbReference type="Bgee" id="ENSG00000142541">
    <property type="expression patterns" value="Expressed in left ovary and 95 other cell types or tissues"/>
</dbReference>
<dbReference type="ExpressionAtlas" id="P40429">
    <property type="expression patterns" value="baseline and differential"/>
</dbReference>
<dbReference type="GO" id="GO:0005737">
    <property type="term" value="C:cytoplasm"/>
    <property type="evidence" value="ECO:0007005"/>
    <property type="project" value="UniProtKB"/>
</dbReference>
<dbReference type="GO" id="GO:0005829">
    <property type="term" value="C:cytosol"/>
    <property type="evidence" value="ECO:0000304"/>
    <property type="project" value="Reactome"/>
</dbReference>
<dbReference type="GO" id="GO:0022625">
    <property type="term" value="C:cytosolic large ribosomal subunit"/>
    <property type="evidence" value="ECO:0000314"/>
    <property type="project" value="UniProtKB"/>
</dbReference>
<dbReference type="GO" id="GO:0022626">
    <property type="term" value="C:cytosolic ribosome"/>
    <property type="evidence" value="ECO:0000314"/>
    <property type="project" value="FlyBase"/>
</dbReference>
<dbReference type="GO" id="GO:0005925">
    <property type="term" value="C:focal adhesion"/>
    <property type="evidence" value="ECO:0007005"/>
    <property type="project" value="UniProtKB"/>
</dbReference>
<dbReference type="GO" id="GO:0097452">
    <property type="term" value="C:GAIT complex"/>
    <property type="evidence" value="ECO:0000314"/>
    <property type="project" value="UniProtKB"/>
</dbReference>
<dbReference type="GO" id="GO:0015934">
    <property type="term" value="C:large ribosomal subunit"/>
    <property type="evidence" value="ECO:0000304"/>
    <property type="project" value="ProtInc"/>
</dbReference>
<dbReference type="GO" id="GO:0016020">
    <property type="term" value="C:membrane"/>
    <property type="evidence" value="ECO:0007005"/>
    <property type="project" value="UniProtKB"/>
</dbReference>
<dbReference type="GO" id="GO:0005730">
    <property type="term" value="C:nucleolus"/>
    <property type="evidence" value="ECO:0007005"/>
    <property type="project" value="UniProtKB"/>
</dbReference>
<dbReference type="GO" id="GO:0005634">
    <property type="term" value="C:nucleus"/>
    <property type="evidence" value="ECO:0007005"/>
    <property type="project" value="UniProtKB"/>
</dbReference>
<dbReference type="GO" id="GO:1990904">
    <property type="term" value="C:ribonucleoprotein complex"/>
    <property type="evidence" value="ECO:0000314"/>
    <property type="project" value="UniProtKB"/>
</dbReference>
<dbReference type="GO" id="GO:0005840">
    <property type="term" value="C:ribosome"/>
    <property type="evidence" value="ECO:0000318"/>
    <property type="project" value="GO_Central"/>
</dbReference>
<dbReference type="GO" id="GO:0045202">
    <property type="term" value="C:synapse"/>
    <property type="evidence" value="ECO:0007669"/>
    <property type="project" value="Ensembl"/>
</dbReference>
<dbReference type="GO" id="GO:0003729">
    <property type="term" value="F:mRNA binding"/>
    <property type="evidence" value="ECO:0000318"/>
    <property type="project" value="GO_Central"/>
</dbReference>
<dbReference type="GO" id="GO:0003723">
    <property type="term" value="F:RNA binding"/>
    <property type="evidence" value="ECO:0007005"/>
    <property type="project" value="UniProtKB"/>
</dbReference>
<dbReference type="GO" id="GO:0003735">
    <property type="term" value="F:structural constituent of ribosome"/>
    <property type="evidence" value="ECO:0000314"/>
    <property type="project" value="UniProtKB"/>
</dbReference>
<dbReference type="GO" id="GO:0071346">
    <property type="term" value="P:cellular response to type II interferon"/>
    <property type="evidence" value="ECO:0000314"/>
    <property type="project" value="UniProtKB"/>
</dbReference>
<dbReference type="GO" id="GO:0002181">
    <property type="term" value="P:cytoplasmic translation"/>
    <property type="evidence" value="ECO:0000303"/>
    <property type="project" value="ComplexPortal"/>
</dbReference>
<dbReference type="GO" id="GO:0042592">
    <property type="term" value="P:homeostatic process"/>
    <property type="evidence" value="ECO:0007669"/>
    <property type="project" value="Ensembl"/>
</dbReference>
<dbReference type="GO" id="GO:0060425">
    <property type="term" value="P:lung morphogenesis"/>
    <property type="evidence" value="ECO:0007669"/>
    <property type="project" value="Ensembl"/>
</dbReference>
<dbReference type="GO" id="GO:0048246">
    <property type="term" value="P:macrophage chemotaxis"/>
    <property type="evidence" value="ECO:0007669"/>
    <property type="project" value="Ensembl"/>
</dbReference>
<dbReference type="GO" id="GO:1901194">
    <property type="term" value="P:negative regulation of formation of translation preinitiation complex"/>
    <property type="evidence" value="ECO:0000314"/>
    <property type="project" value="UniProtKB"/>
</dbReference>
<dbReference type="GO" id="GO:0017148">
    <property type="term" value="P:negative regulation of translation"/>
    <property type="evidence" value="ECO:0000314"/>
    <property type="project" value="UniProtKB"/>
</dbReference>
<dbReference type="GO" id="GO:0032819">
    <property type="term" value="P:positive regulation of natural killer cell proliferation"/>
    <property type="evidence" value="ECO:0007669"/>
    <property type="project" value="Ensembl"/>
</dbReference>
<dbReference type="GO" id="GO:0032496">
    <property type="term" value="P:response to lipopolysaccharide"/>
    <property type="evidence" value="ECO:0007669"/>
    <property type="project" value="Ensembl"/>
</dbReference>
<dbReference type="GO" id="GO:0006412">
    <property type="term" value="P:translation"/>
    <property type="evidence" value="ECO:0000303"/>
    <property type="project" value="UniProtKB"/>
</dbReference>
<dbReference type="CDD" id="cd00392">
    <property type="entry name" value="Ribosomal_L13"/>
    <property type="match status" value="1"/>
</dbReference>
<dbReference type="FunFam" id="6.10.250.3250:FF:000001">
    <property type="entry name" value="60S ribosomal protein L13a"/>
    <property type="match status" value="1"/>
</dbReference>
<dbReference type="FunFam" id="3.90.1180.10:FF:000002">
    <property type="entry name" value="60S ribosomal protein L16"/>
    <property type="match status" value="1"/>
</dbReference>
<dbReference type="Gene3D" id="6.10.250.3250">
    <property type="match status" value="1"/>
</dbReference>
<dbReference type="Gene3D" id="3.90.1180.10">
    <property type="entry name" value="Ribosomal protein L13"/>
    <property type="match status" value="1"/>
</dbReference>
<dbReference type="HAMAP" id="MF_01366">
    <property type="entry name" value="Ribosomal_uL13"/>
    <property type="match status" value="1"/>
</dbReference>
<dbReference type="InterPro" id="IPR005822">
    <property type="entry name" value="Ribosomal_uL13"/>
</dbReference>
<dbReference type="InterPro" id="IPR023563">
    <property type="entry name" value="Ribosomal_uL13_CS"/>
</dbReference>
<dbReference type="InterPro" id="IPR005755">
    <property type="entry name" value="Ribosomal_uL13_euk/arc"/>
</dbReference>
<dbReference type="InterPro" id="IPR036899">
    <property type="entry name" value="Ribosomal_uL13_sf"/>
</dbReference>
<dbReference type="NCBIfam" id="TIGR01077">
    <property type="entry name" value="L13_A_E"/>
    <property type="match status" value="1"/>
</dbReference>
<dbReference type="PANTHER" id="PTHR11545:SF3">
    <property type="entry name" value="LARGE RIBOSOMAL SUBUNIT PROTEIN UL13"/>
    <property type="match status" value="1"/>
</dbReference>
<dbReference type="PANTHER" id="PTHR11545">
    <property type="entry name" value="RIBOSOMAL PROTEIN L13"/>
    <property type="match status" value="1"/>
</dbReference>
<dbReference type="Pfam" id="PF00572">
    <property type="entry name" value="Ribosomal_L13"/>
    <property type="match status" value="1"/>
</dbReference>
<dbReference type="SUPFAM" id="SSF52161">
    <property type="entry name" value="Ribosomal protein L13"/>
    <property type="match status" value="1"/>
</dbReference>
<dbReference type="PROSITE" id="PS00783">
    <property type="entry name" value="RIBOSOMAL_L13"/>
    <property type="match status" value="1"/>
</dbReference>
<gene>
    <name type="primary">RPL13A</name>
</gene>
<name>RL13A_HUMAN</name>
<reference key="1">
    <citation type="journal article" date="1992" name="Genomics">
        <title>Conservation of a 23-kDa human transplantation antigen in mammalian species.</title>
        <authorList>
            <person name="Price S.R."/>
            <person name="Nightingale M.S."/>
            <person name="Bobak D.A."/>
            <person name="Tsuchiya M."/>
            <person name="Moss J."/>
            <person name="Vaughan M."/>
        </authorList>
    </citation>
    <scope>NUCLEOTIDE SEQUENCE [MRNA]</scope>
</reference>
<reference key="2">
    <citation type="journal article" date="1999" name="Gene">
        <title>Gene organization and sequence of the region containing the ribosomal protein genes RPL13A and RPS11 in the human genome and conserved features in the mouse genome.</title>
        <authorList>
            <person name="Higa S."/>
            <person name="Yoshihama M."/>
            <person name="Tanaka T."/>
            <person name="Kenmochi N."/>
        </authorList>
    </citation>
    <scope>NUCLEOTIDE SEQUENCE [GENOMIC DNA]</scope>
</reference>
<reference key="3">
    <citation type="journal article" date="2004" name="Nat. Genet.">
        <title>Complete sequencing and characterization of 21,243 full-length human cDNAs.</title>
        <authorList>
            <person name="Ota T."/>
            <person name="Suzuki Y."/>
            <person name="Nishikawa T."/>
            <person name="Otsuki T."/>
            <person name="Sugiyama T."/>
            <person name="Irie R."/>
            <person name="Wakamatsu A."/>
            <person name="Hayashi K."/>
            <person name="Sato H."/>
            <person name="Nagai K."/>
            <person name="Kimura K."/>
            <person name="Makita H."/>
            <person name="Sekine M."/>
            <person name="Obayashi M."/>
            <person name="Nishi T."/>
            <person name="Shibahara T."/>
            <person name="Tanaka T."/>
            <person name="Ishii S."/>
            <person name="Yamamoto J."/>
            <person name="Saito K."/>
            <person name="Kawai Y."/>
            <person name="Isono Y."/>
            <person name="Nakamura Y."/>
            <person name="Nagahari K."/>
            <person name="Murakami K."/>
            <person name="Yasuda T."/>
            <person name="Iwayanagi T."/>
            <person name="Wagatsuma M."/>
            <person name="Shiratori A."/>
            <person name="Sudo H."/>
            <person name="Hosoiri T."/>
            <person name="Kaku Y."/>
            <person name="Kodaira H."/>
            <person name="Kondo H."/>
            <person name="Sugawara M."/>
            <person name="Takahashi M."/>
            <person name="Kanda K."/>
            <person name="Yokoi T."/>
            <person name="Furuya T."/>
            <person name="Kikkawa E."/>
            <person name="Omura Y."/>
            <person name="Abe K."/>
            <person name="Kamihara K."/>
            <person name="Katsuta N."/>
            <person name="Sato K."/>
            <person name="Tanikawa M."/>
            <person name="Yamazaki M."/>
            <person name="Ninomiya K."/>
            <person name="Ishibashi T."/>
            <person name="Yamashita H."/>
            <person name="Murakawa K."/>
            <person name="Fujimori K."/>
            <person name="Tanai H."/>
            <person name="Kimata M."/>
            <person name="Watanabe M."/>
            <person name="Hiraoka S."/>
            <person name="Chiba Y."/>
            <person name="Ishida S."/>
            <person name="Ono Y."/>
            <person name="Takiguchi S."/>
            <person name="Watanabe S."/>
            <person name="Yosida M."/>
            <person name="Hotuta T."/>
            <person name="Kusano J."/>
            <person name="Kanehori K."/>
            <person name="Takahashi-Fujii A."/>
            <person name="Hara H."/>
            <person name="Tanase T.-O."/>
            <person name="Nomura Y."/>
            <person name="Togiya S."/>
            <person name="Komai F."/>
            <person name="Hara R."/>
            <person name="Takeuchi K."/>
            <person name="Arita M."/>
            <person name="Imose N."/>
            <person name="Musashino K."/>
            <person name="Yuuki H."/>
            <person name="Oshima A."/>
            <person name="Sasaki N."/>
            <person name="Aotsuka S."/>
            <person name="Yoshikawa Y."/>
            <person name="Matsunawa H."/>
            <person name="Ichihara T."/>
            <person name="Shiohata N."/>
            <person name="Sano S."/>
            <person name="Moriya S."/>
            <person name="Momiyama H."/>
            <person name="Satoh N."/>
            <person name="Takami S."/>
            <person name="Terashima Y."/>
            <person name="Suzuki O."/>
            <person name="Nakagawa S."/>
            <person name="Senoh A."/>
            <person name="Mizoguchi H."/>
            <person name="Goto Y."/>
            <person name="Shimizu F."/>
            <person name="Wakebe H."/>
            <person name="Hishigaki H."/>
            <person name="Watanabe T."/>
            <person name="Sugiyama A."/>
            <person name="Takemoto M."/>
            <person name="Kawakami B."/>
            <person name="Yamazaki M."/>
            <person name="Watanabe K."/>
            <person name="Kumagai A."/>
            <person name="Itakura S."/>
            <person name="Fukuzumi Y."/>
            <person name="Fujimori Y."/>
            <person name="Komiyama M."/>
            <person name="Tashiro H."/>
            <person name="Tanigami A."/>
            <person name="Fujiwara T."/>
            <person name="Ono T."/>
            <person name="Yamada K."/>
            <person name="Fujii Y."/>
            <person name="Ozaki K."/>
            <person name="Hirao M."/>
            <person name="Ohmori Y."/>
            <person name="Kawabata A."/>
            <person name="Hikiji T."/>
            <person name="Kobatake N."/>
            <person name="Inagaki H."/>
            <person name="Ikema Y."/>
            <person name="Okamoto S."/>
            <person name="Okitani R."/>
            <person name="Kawakami T."/>
            <person name="Noguchi S."/>
            <person name="Itoh T."/>
            <person name="Shigeta K."/>
            <person name="Senba T."/>
            <person name="Matsumura K."/>
            <person name="Nakajima Y."/>
            <person name="Mizuno T."/>
            <person name="Morinaga M."/>
            <person name="Sasaki M."/>
            <person name="Togashi T."/>
            <person name="Oyama M."/>
            <person name="Hata H."/>
            <person name="Watanabe M."/>
            <person name="Komatsu T."/>
            <person name="Mizushima-Sugano J."/>
            <person name="Satoh T."/>
            <person name="Shirai Y."/>
            <person name="Takahashi Y."/>
            <person name="Nakagawa K."/>
            <person name="Okumura K."/>
            <person name="Nagase T."/>
            <person name="Nomura N."/>
            <person name="Kikuchi H."/>
            <person name="Masuho Y."/>
            <person name="Yamashita R."/>
            <person name="Nakai K."/>
            <person name="Yada T."/>
            <person name="Nakamura Y."/>
            <person name="Ohara O."/>
            <person name="Isogai T."/>
            <person name="Sugano S."/>
        </authorList>
    </citation>
    <scope>NUCLEOTIDE SEQUENCE [LARGE SCALE MRNA]</scope>
</reference>
<reference key="4">
    <citation type="submission" date="2005-07" db="EMBL/GenBank/DDBJ databases">
        <authorList>
            <person name="Mural R.J."/>
            <person name="Istrail S."/>
            <person name="Sutton G.G."/>
            <person name="Florea L."/>
            <person name="Halpern A.L."/>
            <person name="Mobarry C.M."/>
            <person name="Lippert R."/>
            <person name="Walenz B."/>
            <person name="Shatkay H."/>
            <person name="Dew I."/>
            <person name="Miller J.R."/>
            <person name="Flanigan M.J."/>
            <person name="Edwards N.J."/>
            <person name="Bolanos R."/>
            <person name="Fasulo D."/>
            <person name="Halldorsson B.V."/>
            <person name="Hannenhalli S."/>
            <person name="Turner R."/>
            <person name="Yooseph S."/>
            <person name="Lu F."/>
            <person name="Nusskern D.R."/>
            <person name="Shue B.C."/>
            <person name="Zheng X.H."/>
            <person name="Zhong F."/>
            <person name="Delcher A.L."/>
            <person name="Huson D.H."/>
            <person name="Kravitz S.A."/>
            <person name="Mouchard L."/>
            <person name="Reinert K."/>
            <person name="Remington K.A."/>
            <person name="Clark A.G."/>
            <person name="Waterman M.S."/>
            <person name="Eichler E.E."/>
            <person name="Adams M.D."/>
            <person name="Hunkapiller M.W."/>
            <person name="Myers E.W."/>
            <person name="Venter J.C."/>
        </authorList>
    </citation>
    <scope>NUCLEOTIDE SEQUENCE [LARGE SCALE GENOMIC DNA]</scope>
</reference>
<reference key="5">
    <citation type="journal article" date="2004" name="Genome Res.">
        <title>The status, quality, and expansion of the NIH full-length cDNA project: the Mammalian Gene Collection (MGC).</title>
        <authorList>
            <consortium name="The MGC Project Team"/>
        </authorList>
    </citation>
    <scope>NUCLEOTIDE SEQUENCE [LARGE SCALE MRNA]</scope>
    <source>
        <tissue>Lung</tissue>
        <tissue>Lymph</tissue>
        <tissue>Muscle</tissue>
        <tissue>Pancreas</tissue>
        <tissue>Skin</tissue>
    </source>
</reference>
<reference key="6">
    <citation type="submission" date="2009-03" db="UniProtKB">
        <authorList>
            <person name="Bienvenut W.V."/>
            <person name="Waridel P."/>
            <person name="Quadroni M."/>
        </authorList>
    </citation>
    <scope>PROTEIN SEQUENCE OF 2-12; 38-49; 104-115 AND 135-159</scope>
    <scope>CLEAVAGE OF INITIATOR METHIONINE</scope>
    <scope>ACETYLATION AT ALA-2</scope>
    <scope>IDENTIFICATION BY MASS SPECTROMETRY</scope>
    <source>
        <tissue>Cervix carcinoma</tissue>
    </source>
</reference>
<reference key="7">
    <citation type="journal article" date="2003" name="Cell">
        <title>Regulated release of L13a from the 60S ribosomal subunit as a mechanism of transcript-specific translational control.</title>
        <authorList>
            <person name="Mazumder B."/>
            <person name="Sampath P."/>
            <person name="Seshadri V."/>
            <person name="Maitra R.K."/>
            <person name="DiCorleto P.E."/>
            <person name="Fox P.L."/>
        </authorList>
    </citation>
    <scope>FUNCTION</scope>
    <scope>SUBUNIT</scope>
    <scope>SUBCELLULAR LOCATION</scope>
    <scope>PHOSPHORYLATION</scope>
</reference>
<reference key="8">
    <citation type="journal article" date="2003" name="J. Protein Chem.">
        <title>Characterization and analysis of posttranslational modifications of the human large cytoplasmic ribosomal subunit proteins by mass spectrometry and Edman sequencing.</title>
        <authorList>
            <person name="Odintsova T.I."/>
            <person name="Muller E.C."/>
            <person name="Ivanov A.V."/>
            <person name="Egorov T.A."/>
            <person name="Bienert R."/>
            <person name="Vladimirov S.N."/>
            <person name="Kostka S."/>
            <person name="Otto A."/>
            <person name="Wittmann-Liebold B."/>
            <person name="Karpova G.G."/>
        </authorList>
    </citation>
    <scope>ACETYLATION AT ALA-2</scope>
    <scope>IDENTIFICATION BY MASS SPECTROMETRY</scope>
    <scope>SUBUNIT</scope>
</reference>
<reference key="9">
    <citation type="journal article" date="2004" name="Cell">
        <title>Noncanonical function of glutamyl-prolyl-tRNA synthetase: gene-specific silencing of translation.</title>
        <authorList>
            <person name="Sampath P."/>
            <person name="Mazumder B."/>
            <person name="Seshadri V."/>
            <person name="Gerber C.A."/>
            <person name="Chavatte L."/>
            <person name="Kinter M."/>
            <person name="Ting S.M."/>
            <person name="Dignam J.D."/>
            <person name="Kim S."/>
            <person name="Driscoll D.M."/>
            <person name="Fox P.L."/>
        </authorList>
    </citation>
    <scope>IDENTIFICATION IN THE GAIT COMPLEX</scope>
</reference>
<reference key="10">
    <citation type="journal article" date="2007" name="Mol. Cell">
        <title>L13a blocks 48S assembly: role of a general initiation factor in mRNA-specific translational control.</title>
        <authorList>
            <person name="Kapasi P."/>
            <person name="Chaudhuri S."/>
            <person name="Vyas K."/>
            <person name="Baus D."/>
            <person name="Komar A.A."/>
            <person name="Fox P.L."/>
            <person name="Merrick W.C."/>
            <person name="Mazumder B."/>
        </authorList>
    </citation>
    <scope>FUNCTION</scope>
    <scope>INTERACTION WITH EIF4G1</scope>
</reference>
<reference key="11">
    <citation type="journal article" date="2007" name="RNA">
        <title>Human ribosomal protein L13a is dispensable for canonical ribosome function but indispensable for efficient rRNA methylation.</title>
        <authorList>
            <person name="Chaudhuri S."/>
            <person name="Vyas K."/>
            <person name="Kapasi P."/>
            <person name="Komar A.A."/>
            <person name="Dinman J.D."/>
            <person name="Barik S."/>
            <person name="Mazumder B."/>
        </authorList>
    </citation>
    <scope>FUNCTION</scope>
</reference>
<reference key="12">
    <citation type="journal article" date="2008" name="Mol. Cell">
        <title>DAPK-ZIPK-L13a axis constitutes a negative-feedback module regulating inflammatory gene expression.</title>
        <authorList>
            <person name="Mukhopadhyay R."/>
            <person name="Ray P.S."/>
            <person name="Arif A."/>
            <person name="Brady A.K."/>
            <person name="Kinter M."/>
            <person name="Fox P.L."/>
        </authorList>
    </citation>
    <scope>PHOSPHORYLATION AT SER-77</scope>
    <scope>MUTAGENESIS OF SER-77</scope>
</reference>
<reference key="13">
    <citation type="journal article" date="2009" name="Anal. Chem.">
        <title>Lys-N and trypsin cover complementary parts of the phosphoproteome in a refined SCX-based approach.</title>
        <authorList>
            <person name="Gauci S."/>
            <person name="Helbig A.O."/>
            <person name="Slijper M."/>
            <person name="Krijgsveld J."/>
            <person name="Heck A.J."/>
            <person name="Mohammed S."/>
        </authorList>
    </citation>
    <scope>ACETYLATION [LARGE SCALE ANALYSIS] AT ALA-2</scope>
    <scope>CLEAVAGE OF INITIATOR METHIONINE [LARGE SCALE ANALYSIS]</scope>
    <scope>IDENTIFICATION BY MASS SPECTROMETRY [LARGE SCALE ANALYSIS]</scope>
</reference>
<reference key="14">
    <citation type="journal article" date="2009" name="Science">
        <title>Lysine acetylation targets protein complexes and co-regulates major cellular functions.</title>
        <authorList>
            <person name="Choudhary C."/>
            <person name="Kumar C."/>
            <person name="Gnad F."/>
            <person name="Nielsen M.L."/>
            <person name="Rehman M."/>
            <person name="Walther T.C."/>
            <person name="Olsen J.V."/>
            <person name="Mann M."/>
        </authorList>
    </citation>
    <scope>ACETYLATION [LARGE SCALE ANALYSIS] AT LYS-191</scope>
    <scope>IDENTIFICATION BY MASS SPECTROMETRY [LARGE SCALE ANALYSIS]</scope>
</reference>
<reference key="15">
    <citation type="journal article" date="2011" name="BMC Syst. Biol.">
        <title>Initial characterization of the human central proteome.</title>
        <authorList>
            <person name="Burkard T.R."/>
            <person name="Planyavsky M."/>
            <person name="Kaupe I."/>
            <person name="Breitwieser F.P."/>
            <person name="Buerckstuemmer T."/>
            <person name="Bennett K.L."/>
            <person name="Superti-Furga G."/>
            <person name="Colinge J."/>
        </authorList>
    </citation>
    <scope>IDENTIFICATION BY MASS SPECTROMETRY [LARGE SCALE ANALYSIS]</scope>
</reference>
<reference key="16">
    <citation type="journal article" date="2012" name="Mol. Cell. Biol.">
        <title>Heterotrimeric GAIT complex drives transcript-selective translation inhibition in murine macrophages.</title>
        <authorList>
            <person name="Arif A."/>
            <person name="Chatterjee P."/>
            <person name="Moodt R.A."/>
            <person name="Fox P.L."/>
        </authorList>
    </citation>
    <scope>FUNCTION</scope>
    <scope>RECONSTITUTION OF THE GAIT COMPLEX</scope>
</reference>
<reference key="17">
    <citation type="journal article" date="2012" name="Mol. Cell. Proteomics">
        <title>Comparative large-scale characterisation of plant vs. mammal proteins reveals similar and idiosyncratic N-alpha acetylation features.</title>
        <authorList>
            <person name="Bienvenut W.V."/>
            <person name="Sumpton D."/>
            <person name="Martinez A."/>
            <person name="Lilla S."/>
            <person name="Espagne C."/>
            <person name="Meinnel T."/>
            <person name="Giglione C."/>
        </authorList>
    </citation>
    <scope>ACETYLATION [LARGE SCALE ANALYSIS] AT ALA-2</scope>
    <scope>CLEAVAGE OF INITIATOR METHIONINE [LARGE SCALE ANALYSIS]</scope>
    <scope>IDENTIFICATION BY MASS SPECTROMETRY [LARGE SCALE ANALYSIS]</scope>
</reference>
<reference key="18">
    <citation type="journal article" date="2012" name="Proc. Natl. Acad. Sci. U.S.A.">
        <title>N-terminal acetylome analyses and functional insights of the N-terminal acetyltransferase NatB.</title>
        <authorList>
            <person name="Van Damme P."/>
            <person name="Lasa M."/>
            <person name="Polevoda B."/>
            <person name="Gazquez C."/>
            <person name="Elosegui-Artola A."/>
            <person name="Kim D.S."/>
            <person name="De Juan-Pardo E."/>
            <person name="Demeyer K."/>
            <person name="Hole K."/>
            <person name="Larrea E."/>
            <person name="Timmerman E."/>
            <person name="Prieto J."/>
            <person name="Arnesen T."/>
            <person name="Sherman F."/>
            <person name="Gevaert K."/>
            <person name="Aldabe R."/>
        </authorList>
    </citation>
    <scope>ACETYLATION [LARGE SCALE ANALYSIS] AT ALA-2</scope>
    <scope>CLEAVAGE OF INITIATOR METHIONINE [LARGE SCALE ANALYSIS]</scope>
    <scope>IDENTIFICATION BY MASS SPECTROMETRY [LARGE SCALE ANALYSIS]</scope>
</reference>
<reference key="19">
    <citation type="journal article" date="2014" name="Curr. Opin. Struct. Biol.">
        <title>A new system for naming ribosomal proteins.</title>
        <authorList>
            <person name="Ban N."/>
            <person name="Beckmann R."/>
            <person name="Cate J.H.D."/>
            <person name="Dinman J.D."/>
            <person name="Dragon F."/>
            <person name="Ellis S.R."/>
            <person name="Lafontaine D.L.J."/>
            <person name="Lindahl L."/>
            <person name="Liljas A."/>
            <person name="Lipton J.M."/>
            <person name="McAlear M.A."/>
            <person name="Moore P.B."/>
            <person name="Noller H.F."/>
            <person name="Ortega J."/>
            <person name="Panse V.G."/>
            <person name="Ramakrishnan V."/>
            <person name="Spahn C.M.T."/>
            <person name="Steitz T.A."/>
            <person name="Tchorzewski M."/>
            <person name="Tollervey D."/>
            <person name="Warren A.J."/>
            <person name="Williamson J.R."/>
            <person name="Wilson D."/>
            <person name="Yonath A."/>
            <person name="Yusupov M."/>
        </authorList>
    </citation>
    <scope>NOMENCLATURE</scope>
</reference>
<reference key="20">
    <citation type="journal article" date="2015" name="Hum. Mol. Genet.">
        <title>Biochemical and cellular analysis of Ogden syndrome reveals downstream Nt-acetylation defects.</title>
        <authorList>
            <person name="Myklebust L.M."/>
            <person name="Van Damme P."/>
            <person name="Stoeve S.I."/>
            <person name="Doerfel M.J."/>
            <person name="Abboud A."/>
            <person name="Kalvik T.V."/>
            <person name="Grauffel C."/>
            <person name="Jonckheere V."/>
            <person name="Wu Y."/>
            <person name="Swensen J."/>
            <person name="Kaasa H."/>
            <person name="Liszczak G."/>
            <person name="Marmorstein R."/>
            <person name="Reuter N."/>
            <person name="Lyon G.J."/>
            <person name="Gevaert K."/>
            <person name="Arnesen T."/>
        </authorList>
    </citation>
    <scope>ACETYLATION AT ALA-2</scope>
    <scope>CLEAVAGE OF INITIATOR METHIONINE</scope>
</reference>
<reference key="21">
    <citation type="journal article" date="2015" name="Proteomics">
        <title>N-terminome analysis of the human mitochondrial proteome.</title>
        <authorList>
            <person name="Vaca Jacome A.S."/>
            <person name="Rabilloud T."/>
            <person name="Schaeffer-Reiss C."/>
            <person name="Rompais M."/>
            <person name="Ayoub D."/>
            <person name="Lane L."/>
            <person name="Bairoch A."/>
            <person name="Van Dorsselaer A."/>
            <person name="Carapito C."/>
        </authorList>
    </citation>
    <scope>ACETYLATION [LARGE SCALE ANALYSIS] AT ALA-2</scope>
    <scope>CLEAVAGE OF INITIATOR METHIONINE [LARGE SCALE ANALYSIS]</scope>
    <scope>IDENTIFICATION BY MASS SPECTROMETRY [LARGE SCALE ANALYSIS]</scope>
</reference>
<reference key="22">
    <citation type="journal article" date="2013" name="Nature">
        <title>Structures of the human and Drosophila 80S ribosome.</title>
        <authorList>
            <person name="Anger A.M."/>
            <person name="Armache J.P."/>
            <person name="Berninghausen O."/>
            <person name="Habeck M."/>
            <person name="Subklewe M."/>
            <person name="Wilson D.N."/>
            <person name="Beckmann R."/>
        </authorList>
    </citation>
    <scope>STRUCTURE BY ELECTRON MICROSCOPY (5.0 ANGSTROMS)</scope>
    <scope>FUNCTION</scope>
    <scope>SUBUNIT</scope>
    <scope>SUBCELLULAR LOCATION</scope>
</reference>
<reference evidence="17 18 19 20" key="23">
    <citation type="journal article" date="2020" name="Nat. Commun.">
        <title>Structural snapshots of human pre-60S ribosomal particles before and after nuclear export.</title>
        <authorList>
            <person name="Liang X."/>
            <person name="Zuo M.Q."/>
            <person name="Zhang Y."/>
            <person name="Li N."/>
            <person name="Ma C."/>
            <person name="Dong M.Q."/>
            <person name="Gao N."/>
        </authorList>
    </citation>
    <scope>STRUCTURE BY ELECTRON MICROSCOPY (3.09 ANGSTROMS)</scope>
</reference>
<evidence type="ECO:0000250" key="1">
    <source>
        <dbReference type="UniProtKB" id="P19253"/>
    </source>
</evidence>
<evidence type="ECO:0000269" key="2">
    <source>
    </source>
</evidence>
<evidence type="ECO:0000269" key="3">
    <source>
    </source>
</evidence>
<evidence type="ECO:0000269" key="4">
    <source>
    </source>
</evidence>
<evidence type="ECO:0000269" key="5">
    <source>
    </source>
</evidence>
<evidence type="ECO:0000269" key="6">
    <source>
    </source>
</evidence>
<evidence type="ECO:0000269" key="7">
    <source>
    </source>
</evidence>
<evidence type="ECO:0000269" key="8">
    <source>
    </source>
</evidence>
<evidence type="ECO:0000269" key="9">
    <source>
    </source>
</evidence>
<evidence type="ECO:0000269" key="10">
    <source>
    </source>
</evidence>
<evidence type="ECO:0000269" key="11">
    <source>
    </source>
</evidence>
<evidence type="ECO:0000269" key="12">
    <source ref="6"/>
</evidence>
<evidence type="ECO:0000303" key="13">
    <source>
    </source>
</evidence>
<evidence type="ECO:0000305" key="14"/>
<evidence type="ECO:0000305" key="15">
    <source>
    </source>
</evidence>
<evidence type="ECO:0000305" key="16">
    <source>
    </source>
</evidence>
<evidence type="ECO:0007744" key="17">
    <source>
        <dbReference type="PDB" id="6LQM"/>
    </source>
</evidence>
<evidence type="ECO:0007744" key="18">
    <source>
        <dbReference type="PDB" id="6LSR"/>
    </source>
</evidence>
<evidence type="ECO:0007744" key="19">
    <source>
        <dbReference type="PDB" id="6LSS"/>
    </source>
</evidence>
<evidence type="ECO:0007744" key="20">
    <source>
        <dbReference type="PDB" id="6LU8"/>
    </source>
</evidence>
<evidence type="ECO:0007744" key="21">
    <source>
    </source>
</evidence>
<evidence type="ECO:0007744" key="22">
    <source>
    </source>
</evidence>
<evidence type="ECO:0007744" key="23">
    <source>
    </source>
</evidence>
<evidence type="ECO:0007744" key="24">
    <source>
    </source>
</evidence>
<evidence type="ECO:0007744" key="25">
    <source>
    </source>
</evidence>